<reference key="1">
    <citation type="journal article" date="2005" name="Science">
        <title>The transcriptional landscape of the mammalian genome.</title>
        <authorList>
            <person name="Carninci P."/>
            <person name="Kasukawa T."/>
            <person name="Katayama S."/>
            <person name="Gough J."/>
            <person name="Frith M.C."/>
            <person name="Maeda N."/>
            <person name="Oyama R."/>
            <person name="Ravasi T."/>
            <person name="Lenhard B."/>
            <person name="Wells C."/>
            <person name="Kodzius R."/>
            <person name="Shimokawa K."/>
            <person name="Bajic V.B."/>
            <person name="Brenner S.E."/>
            <person name="Batalov S."/>
            <person name="Forrest A.R."/>
            <person name="Zavolan M."/>
            <person name="Davis M.J."/>
            <person name="Wilming L.G."/>
            <person name="Aidinis V."/>
            <person name="Allen J.E."/>
            <person name="Ambesi-Impiombato A."/>
            <person name="Apweiler R."/>
            <person name="Aturaliya R.N."/>
            <person name="Bailey T.L."/>
            <person name="Bansal M."/>
            <person name="Baxter L."/>
            <person name="Beisel K.W."/>
            <person name="Bersano T."/>
            <person name="Bono H."/>
            <person name="Chalk A.M."/>
            <person name="Chiu K.P."/>
            <person name="Choudhary V."/>
            <person name="Christoffels A."/>
            <person name="Clutterbuck D.R."/>
            <person name="Crowe M.L."/>
            <person name="Dalla E."/>
            <person name="Dalrymple B.P."/>
            <person name="de Bono B."/>
            <person name="Della Gatta G."/>
            <person name="di Bernardo D."/>
            <person name="Down T."/>
            <person name="Engstrom P."/>
            <person name="Fagiolini M."/>
            <person name="Faulkner G."/>
            <person name="Fletcher C.F."/>
            <person name="Fukushima T."/>
            <person name="Furuno M."/>
            <person name="Futaki S."/>
            <person name="Gariboldi M."/>
            <person name="Georgii-Hemming P."/>
            <person name="Gingeras T.R."/>
            <person name="Gojobori T."/>
            <person name="Green R.E."/>
            <person name="Gustincich S."/>
            <person name="Harbers M."/>
            <person name="Hayashi Y."/>
            <person name="Hensch T.K."/>
            <person name="Hirokawa N."/>
            <person name="Hill D."/>
            <person name="Huminiecki L."/>
            <person name="Iacono M."/>
            <person name="Ikeo K."/>
            <person name="Iwama A."/>
            <person name="Ishikawa T."/>
            <person name="Jakt M."/>
            <person name="Kanapin A."/>
            <person name="Katoh M."/>
            <person name="Kawasawa Y."/>
            <person name="Kelso J."/>
            <person name="Kitamura H."/>
            <person name="Kitano H."/>
            <person name="Kollias G."/>
            <person name="Krishnan S.P."/>
            <person name="Kruger A."/>
            <person name="Kummerfeld S.K."/>
            <person name="Kurochkin I.V."/>
            <person name="Lareau L.F."/>
            <person name="Lazarevic D."/>
            <person name="Lipovich L."/>
            <person name="Liu J."/>
            <person name="Liuni S."/>
            <person name="McWilliam S."/>
            <person name="Madan Babu M."/>
            <person name="Madera M."/>
            <person name="Marchionni L."/>
            <person name="Matsuda H."/>
            <person name="Matsuzawa S."/>
            <person name="Miki H."/>
            <person name="Mignone F."/>
            <person name="Miyake S."/>
            <person name="Morris K."/>
            <person name="Mottagui-Tabar S."/>
            <person name="Mulder N."/>
            <person name="Nakano N."/>
            <person name="Nakauchi H."/>
            <person name="Ng P."/>
            <person name="Nilsson R."/>
            <person name="Nishiguchi S."/>
            <person name="Nishikawa S."/>
            <person name="Nori F."/>
            <person name="Ohara O."/>
            <person name="Okazaki Y."/>
            <person name="Orlando V."/>
            <person name="Pang K.C."/>
            <person name="Pavan W.J."/>
            <person name="Pavesi G."/>
            <person name="Pesole G."/>
            <person name="Petrovsky N."/>
            <person name="Piazza S."/>
            <person name="Reed J."/>
            <person name="Reid J.F."/>
            <person name="Ring B.Z."/>
            <person name="Ringwald M."/>
            <person name="Rost B."/>
            <person name="Ruan Y."/>
            <person name="Salzberg S.L."/>
            <person name="Sandelin A."/>
            <person name="Schneider C."/>
            <person name="Schoenbach C."/>
            <person name="Sekiguchi K."/>
            <person name="Semple C.A."/>
            <person name="Seno S."/>
            <person name="Sessa L."/>
            <person name="Sheng Y."/>
            <person name="Shibata Y."/>
            <person name="Shimada H."/>
            <person name="Shimada K."/>
            <person name="Silva D."/>
            <person name="Sinclair B."/>
            <person name="Sperling S."/>
            <person name="Stupka E."/>
            <person name="Sugiura K."/>
            <person name="Sultana R."/>
            <person name="Takenaka Y."/>
            <person name="Taki K."/>
            <person name="Tammoja K."/>
            <person name="Tan S.L."/>
            <person name="Tang S."/>
            <person name="Taylor M.S."/>
            <person name="Tegner J."/>
            <person name="Teichmann S.A."/>
            <person name="Ueda H.R."/>
            <person name="van Nimwegen E."/>
            <person name="Verardo R."/>
            <person name="Wei C.L."/>
            <person name="Yagi K."/>
            <person name="Yamanishi H."/>
            <person name="Zabarovsky E."/>
            <person name="Zhu S."/>
            <person name="Zimmer A."/>
            <person name="Hide W."/>
            <person name="Bult C."/>
            <person name="Grimmond S.M."/>
            <person name="Teasdale R.D."/>
            <person name="Liu E.T."/>
            <person name="Brusic V."/>
            <person name="Quackenbush J."/>
            <person name="Wahlestedt C."/>
            <person name="Mattick J.S."/>
            <person name="Hume D.A."/>
            <person name="Kai C."/>
            <person name="Sasaki D."/>
            <person name="Tomaru Y."/>
            <person name="Fukuda S."/>
            <person name="Kanamori-Katayama M."/>
            <person name="Suzuki M."/>
            <person name="Aoki J."/>
            <person name="Arakawa T."/>
            <person name="Iida J."/>
            <person name="Imamura K."/>
            <person name="Itoh M."/>
            <person name="Kato T."/>
            <person name="Kawaji H."/>
            <person name="Kawagashira N."/>
            <person name="Kawashima T."/>
            <person name="Kojima M."/>
            <person name="Kondo S."/>
            <person name="Konno H."/>
            <person name="Nakano K."/>
            <person name="Ninomiya N."/>
            <person name="Nishio T."/>
            <person name="Okada M."/>
            <person name="Plessy C."/>
            <person name="Shibata K."/>
            <person name="Shiraki T."/>
            <person name="Suzuki S."/>
            <person name="Tagami M."/>
            <person name="Waki K."/>
            <person name="Watahiki A."/>
            <person name="Okamura-Oho Y."/>
            <person name="Suzuki H."/>
            <person name="Kawai J."/>
            <person name="Hayashizaki Y."/>
        </authorList>
    </citation>
    <scope>NUCLEOTIDE SEQUENCE [LARGE SCALE MRNA]</scope>
    <source>
        <strain>C57BL/6J</strain>
        <tissue>Heart</tissue>
    </source>
</reference>
<reference key="2">
    <citation type="journal article" date="2001" name="Genomics">
        <title>Leiomodins: larger members of the tropomodulin (Tmod) gene family.</title>
        <authorList>
            <person name="Conley C.A."/>
            <person name="Fritz-Six K.L."/>
            <person name="Almenar-Queralt A."/>
            <person name="Fowler V.M."/>
        </authorList>
    </citation>
    <scope>NUCLEOTIDE SEQUENCE [MRNA] OF 221-550</scope>
</reference>
<reference key="3">
    <citation type="journal article" date="2007" name="Arch. Biochem. Biophys.">
        <title>Leiomodin/tropomyosin interactions are isoform specific.</title>
        <authorList>
            <person name="Kostyukova A.S."/>
        </authorList>
    </citation>
    <scope>SUBUNIT</scope>
</reference>
<reference key="4">
    <citation type="journal article" date="2010" name="Cell">
        <title>A tissue-specific atlas of mouse protein phosphorylation and expression.</title>
        <authorList>
            <person name="Huttlin E.L."/>
            <person name="Jedrychowski M.P."/>
            <person name="Elias J.E."/>
            <person name="Goswami T."/>
            <person name="Rad R."/>
            <person name="Beausoleil S.A."/>
            <person name="Villen J."/>
            <person name="Haas W."/>
            <person name="Sowa M.E."/>
            <person name="Gygi S.P."/>
        </authorList>
    </citation>
    <scope>PHOSPHORYLATION [LARGE SCALE ANALYSIS] AT SER-11 AND SER-15</scope>
    <scope>IDENTIFICATION BY MASS SPECTROMETRY [LARGE SCALE ANALYSIS]</scope>
    <source>
        <tissue>Heart</tissue>
    </source>
</reference>
<reference key="5">
    <citation type="journal article" date="2015" name="Proc. Natl. Acad. Sci. U.S.A.">
        <title>Knockout of Lmod2 results in shorter thin filaments followed by dilated cardiomyopathy and juvenile lethality.</title>
        <authorList>
            <person name="Pappas C.T."/>
            <person name="Mayfield R.M."/>
            <person name="Henderson C."/>
            <person name="Jamilpour N."/>
            <person name="Cover C."/>
            <person name="Hernandez Z."/>
            <person name="Hutchinson K.R."/>
            <person name="Chu M."/>
            <person name="Nam K.H."/>
            <person name="Valdez J.M."/>
            <person name="Wong P.K."/>
            <person name="Granzier H.L."/>
            <person name="Gregorio C.C."/>
        </authorList>
    </citation>
    <scope>DISRUPTION PHENOTYPE</scope>
    <scope>FUNCTION</scope>
    <scope>TISSUE SPECIFICITY</scope>
</reference>
<reference key="6">
    <citation type="journal article" date="2016" name="Cell Biosci.">
        <title>Lmod2 piggyBac mutant mice exhibit dilated cardiomyopathy.</title>
        <authorList>
            <person name="Li S."/>
            <person name="Mo K."/>
            <person name="Tian H."/>
            <person name="Chu C."/>
            <person name="Sun S."/>
            <person name="Tian L."/>
            <person name="Ding S."/>
            <person name="Li T.R."/>
            <person name="Wu X."/>
            <person name="Liu F."/>
            <person name="Zhang Z."/>
            <person name="Xu T."/>
            <person name="Sun L.V."/>
        </authorList>
    </citation>
    <scope>DISRUPTION PHENOTYPE</scope>
    <scope>FUNCTION</scope>
    <scope>TISSUE SPECIFICITY</scope>
</reference>
<reference key="7">
    <citation type="journal article" date="2019" name="Sci. Adv.">
        <title>Disruption of cardiac thin filament assembly arising from a mutation in LMOD2: A novel mechanism of neonatal dilated cardiomyopathy.</title>
        <authorList>
            <person name="Ahrens-Nicklas R.C."/>
            <person name="Pappas C.T."/>
            <person name="Farman G.P."/>
            <person name="Mayfield R.M."/>
            <person name="Larrinaga T.M."/>
            <person name="Medne L."/>
            <person name="Ritter A."/>
            <person name="Krantz I.D."/>
            <person name="Murali C."/>
            <person name="Lin K.Y."/>
            <person name="Berger J.H."/>
            <person name="Yum S.W."/>
            <person name="Carreon C.K."/>
            <person name="Gregorio C.C."/>
        </authorList>
    </citation>
    <scope>MUTAGENESIS OF 405-TRP--ARG-550</scope>
</reference>
<reference key="8">
    <citation type="journal article" date="2023" name="Proc. Natl. Acad. Sci. U.S.A.">
        <title>A human FLII gene variant alters sarcomeric actin thin filament length and predisposes to cardiomyopathy.</title>
        <authorList>
            <person name="Kuwabara Y."/>
            <person name="York A.J."/>
            <person name="Lin S.C."/>
            <person name="Sargent M.A."/>
            <person name="Grimes K.M."/>
            <person name="Pirruccello J.P."/>
            <person name="Molkentin J.D."/>
        </authorList>
    </citation>
    <scope>INTERACTION WITH FLII</scope>
</reference>
<accession>Q3UHZ5</accession>
<accession>Q99PM7</accession>
<sequence>MSTFGYRRGLSKYESIDEDELLASLSPEELKELERELEDIEPDRNLPVGLRQKSLTEKTPTGNFSREALMAYWEKESQKLLEKERLGECGKVAEEDKEESEEELIFTESNSEVSEEVCTEDEEESQEEEEDSEEEEDSEEEEETTEATKHINGTVSYNSVNTDNSKPKTFKSQIENINLTNGNSGRTQRNSESPAAIHPCGNPTVIEDALEKIRNNDPDTTEVNLNNIENITTQTLSRFAEALKENTVVKTFSLANTHADDAAAIAIADMLKVNEHITSVNVESNFITGKGILAIMRALQHNTVLTELRFHNQRHIMGSQVEMEIVKLLKENTTLLRLGYHFELPGPRMSMTSILTRNMDKQRQKRMQEQKQQEGHDGGAALRTKVWQRGTPGSSPYASPRQSPWSSPKVSKKVHTGRSRPPSPVAPPPPPPPPPLPPHMLPPPPPPPAPPLPEKKLITRNIAEVIKQQESAQRALQNGQRKKKGKKVKKQPNNILKEIKNSLRSVQEKKMEDSSRPSTPQRSVHENLMEAIRGSSIRQLRRVEVPEALR</sequence>
<protein>
    <recommendedName>
        <fullName>Leiomodin-2</fullName>
    </recommendedName>
    <alternativeName>
        <fullName>Cardiac leiomodin</fullName>
        <shortName>C-LMOD</shortName>
    </alternativeName>
    <alternativeName>
        <fullName evidence="9">Leiomodin</fullName>
    </alternativeName>
</protein>
<gene>
    <name type="primary">Lmod2</name>
</gene>
<organism>
    <name type="scientific">Mus musculus</name>
    <name type="common">Mouse</name>
    <dbReference type="NCBI Taxonomy" id="10090"/>
    <lineage>
        <taxon>Eukaryota</taxon>
        <taxon>Metazoa</taxon>
        <taxon>Chordata</taxon>
        <taxon>Craniata</taxon>
        <taxon>Vertebrata</taxon>
        <taxon>Euteleostomi</taxon>
        <taxon>Mammalia</taxon>
        <taxon>Eutheria</taxon>
        <taxon>Euarchontoglires</taxon>
        <taxon>Glires</taxon>
        <taxon>Rodentia</taxon>
        <taxon>Myomorpha</taxon>
        <taxon>Muroidea</taxon>
        <taxon>Muridae</taxon>
        <taxon>Murinae</taxon>
        <taxon>Mus</taxon>
        <taxon>Mus</taxon>
    </lineage>
</organism>
<keyword id="KW-0009">Actin-binding</keyword>
<keyword id="KW-0175">Coiled coil</keyword>
<keyword id="KW-0963">Cytoplasm</keyword>
<keyword id="KW-0206">Cytoskeleton</keyword>
<keyword id="KW-0597">Phosphoprotein</keyword>
<keyword id="KW-1185">Reference proteome</keyword>
<feature type="chain" id="PRO_0000311341" description="Leiomodin-2">
    <location>
        <begin position="1"/>
        <end position="550"/>
    </location>
</feature>
<feature type="domain" description="WH2">
    <location>
        <begin position="524"/>
        <end position="543"/>
    </location>
</feature>
<feature type="region of interest" description="Interaction with actin 1" evidence="2">
    <location>
        <begin position="1"/>
        <end position="165"/>
    </location>
</feature>
<feature type="region of interest" description="Interaction with tropomyosin alpha" evidence="2">
    <location>
        <begin position="1"/>
        <end position="47"/>
    </location>
</feature>
<feature type="region of interest" description="Disordered" evidence="4">
    <location>
        <begin position="84"/>
        <end position="202"/>
    </location>
</feature>
<feature type="region of interest" description="Interaction with actin 2" evidence="2">
    <location>
        <begin position="166"/>
        <end position="500"/>
    </location>
</feature>
<feature type="region of interest" description="Disordered" evidence="4">
    <location>
        <begin position="359"/>
        <end position="527"/>
    </location>
</feature>
<feature type="region of interest" description="Interaction with actin 3" evidence="2">
    <location>
        <begin position="524"/>
        <end position="543"/>
    </location>
</feature>
<feature type="coiled-coil region" evidence="3">
    <location>
        <begin position="91"/>
        <end position="147"/>
    </location>
</feature>
<feature type="compositionally biased region" description="Basic and acidic residues" evidence="4">
    <location>
        <begin position="84"/>
        <end position="94"/>
    </location>
</feature>
<feature type="compositionally biased region" description="Acidic residues" evidence="4">
    <location>
        <begin position="95"/>
        <end position="105"/>
    </location>
</feature>
<feature type="compositionally biased region" description="Acidic residues" evidence="4">
    <location>
        <begin position="113"/>
        <end position="145"/>
    </location>
</feature>
<feature type="compositionally biased region" description="Polar residues" evidence="4">
    <location>
        <begin position="151"/>
        <end position="164"/>
    </location>
</feature>
<feature type="compositionally biased region" description="Polar residues" evidence="4">
    <location>
        <begin position="170"/>
        <end position="193"/>
    </location>
</feature>
<feature type="compositionally biased region" description="Basic and acidic residues" evidence="4">
    <location>
        <begin position="359"/>
        <end position="377"/>
    </location>
</feature>
<feature type="compositionally biased region" description="Polar residues" evidence="4">
    <location>
        <begin position="391"/>
        <end position="402"/>
    </location>
</feature>
<feature type="compositionally biased region" description="Pro residues" evidence="4">
    <location>
        <begin position="421"/>
        <end position="452"/>
    </location>
</feature>
<feature type="compositionally biased region" description="Polar residues" evidence="4">
    <location>
        <begin position="468"/>
        <end position="479"/>
    </location>
</feature>
<feature type="compositionally biased region" description="Basic residues" evidence="4">
    <location>
        <begin position="480"/>
        <end position="490"/>
    </location>
</feature>
<feature type="compositionally biased region" description="Basic and acidic residues" evidence="4">
    <location>
        <begin position="497"/>
        <end position="515"/>
    </location>
</feature>
<feature type="modified residue" description="Phosphoserine" evidence="10">
    <location>
        <position position="11"/>
    </location>
</feature>
<feature type="modified residue" description="Phosphoserine" evidence="10">
    <location>
        <position position="15"/>
    </location>
</feature>
<feature type="modified residue" description="Phosphoserine" evidence="1">
    <location>
        <position position="24"/>
    </location>
</feature>
<feature type="modified residue" description="Phosphoserine" evidence="1">
    <location>
        <position position="407"/>
    </location>
</feature>
<feature type="mutagenesis site" description="When expressed in constitutive LMOD2 knockout mice, the mutant reduces onset of cardiac dilation and dysfunction.">
    <location>
        <begin position="405"/>
        <end position="550"/>
    </location>
</feature>
<feature type="sequence conflict" description="In Ref. 2; AAK00789." evidence="9" ref="2">
    <original>V</original>
    <variation>F</variation>
    <location>
        <position position="223"/>
    </location>
</feature>
<comment type="function">
    <text evidence="2 6 7">Mediates nucleation of actin filaments and thereby promotes actin polymerization (By similarity). Plays a role in the regulation of actin filament length (PubMed:26487682). Required for normal sarcomere organization in the heart, and for normal heart function (PubMed:26487682, PubMed:27274810).</text>
</comment>
<comment type="subunit">
    <text evidence="2 5 8">Can bind at least three actin monomers and thereby provides a nucleus for actin filament formation. Interacts (via N-terminus) with tropomyosin alpha (TPM1) (via N-terminus). May also interact with TPM2 (via N-terminus) (PubMed:17572376). Interacts with FLII (PubMed:37126682).</text>
</comment>
<comment type="subcellular location">
    <subcellularLocation>
        <location evidence="2">Cytoplasm</location>
        <location evidence="2">Myofibril</location>
        <location evidence="2">Sarcomere</location>
    </subcellularLocation>
    <subcellularLocation>
        <location evidence="2">Cytoplasm</location>
        <location evidence="2">Myofibril</location>
    </subcellularLocation>
    <subcellularLocation>
        <location evidence="2">Cytoplasm</location>
        <location evidence="2">Myofibril</location>
        <location evidence="2">Sarcomere</location>
        <location evidence="2">M line</location>
    </subcellularLocation>
    <subcellularLocation>
        <location evidence="2">Cytoplasm</location>
        <location evidence="2">Cytoskeleton</location>
    </subcellularLocation>
    <text evidence="2">Colocalizes with actin filaments in sarcomeres. Detected close to the M line.</text>
</comment>
<comment type="tissue specificity">
    <text evidence="6 7">Detected in neonate heart (at protein level) (PubMed:26487682). Detected in embryonic heart and in pharyngeal arches (PubMed:26487682). Detected in adult heart (PubMed:27274810).</text>
</comment>
<comment type="disruption phenotype">
    <text evidence="6 7">Mutant mice are born at the expected Mendelian rate. All die between 15 to 33 days after birth due to early-onset dilated cardiomyopathy. Cardiac muscle thin filaments are shorter than in wild-type, both in embryonic heart and in pups 6 or 15 days after birth. Hearts appear grossly normal at birth, but after 15 days, they display enlarged left ventricles with thin ventricle walls and resuced systolic performance. In contrast, there are no differences in thin filament length in skeletal muscle (PubMed:26487682). Insertion of a transposon in the first, non-coding exon decreases Lmod2 expression by 90% in females and by over 95% in males and gives rise to a phenotype that is closely similar to that of complete gene disruption, except that mutant mice die between three and nine weeks after birth (PubMed:27274810).</text>
</comment>
<comment type="similarity">
    <text evidence="9">Belongs to the tropomodulin family.</text>
</comment>
<comment type="sequence caution" evidence="9">
    <conflict type="erroneous initiation">
        <sequence resource="EMBL-CDS" id="AAK00789"/>
    </conflict>
    <text>Extended N-terminus.</text>
</comment>
<dbReference type="EMBL" id="AK147141">
    <property type="protein sequence ID" value="BAE27711.1"/>
    <property type="molecule type" value="mRNA"/>
</dbReference>
<dbReference type="EMBL" id="AF237628">
    <property type="protein sequence ID" value="AAK00789.1"/>
    <property type="status" value="ALT_INIT"/>
    <property type="molecule type" value="mRNA"/>
</dbReference>
<dbReference type="CCDS" id="CCDS19944.1"/>
<dbReference type="RefSeq" id="NP_444328.1">
    <property type="nucleotide sequence ID" value="NM_053098.2"/>
</dbReference>
<dbReference type="SMR" id="Q3UHZ5"/>
<dbReference type="FunCoup" id="Q3UHZ5">
    <property type="interactions" value="32"/>
</dbReference>
<dbReference type="STRING" id="10090.ENSMUSP00000031694"/>
<dbReference type="iPTMnet" id="Q3UHZ5"/>
<dbReference type="PhosphoSitePlus" id="Q3UHZ5"/>
<dbReference type="jPOST" id="Q3UHZ5"/>
<dbReference type="PaxDb" id="10090-ENSMUSP00000031694"/>
<dbReference type="ProteomicsDB" id="286224"/>
<dbReference type="Antibodypedia" id="55328">
    <property type="antibodies" value="60 antibodies from 13 providers"/>
</dbReference>
<dbReference type="DNASU" id="93677"/>
<dbReference type="Ensembl" id="ENSMUST00000031694.8">
    <property type="protein sequence ID" value="ENSMUSP00000031694.7"/>
    <property type="gene ID" value="ENSMUSG00000029683.8"/>
</dbReference>
<dbReference type="GeneID" id="93677"/>
<dbReference type="KEGG" id="mmu:93677"/>
<dbReference type="UCSC" id="uc009bbu.1">
    <property type="organism name" value="mouse"/>
</dbReference>
<dbReference type="AGR" id="MGI:2135672"/>
<dbReference type="CTD" id="442721"/>
<dbReference type="MGI" id="MGI:2135672">
    <property type="gene designation" value="Lmod2"/>
</dbReference>
<dbReference type="VEuPathDB" id="HostDB:ENSMUSG00000029683"/>
<dbReference type="eggNOG" id="KOG3735">
    <property type="taxonomic scope" value="Eukaryota"/>
</dbReference>
<dbReference type="GeneTree" id="ENSGT00940000156567"/>
<dbReference type="HOGENOM" id="CLU_031052_4_0_1"/>
<dbReference type="InParanoid" id="Q3UHZ5"/>
<dbReference type="OMA" id="EECFTES"/>
<dbReference type="OrthoDB" id="2163268at2759"/>
<dbReference type="PhylomeDB" id="Q3UHZ5"/>
<dbReference type="TreeFam" id="TF315841"/>
<dbReference type="BioGRID-ORCS" id="93677">
    <property type="hits" value="6 hits in 76 CRISPR screens"/>
</dbReference>
<dbReference type="ChiTaRS" id="Lmod2">
    <property type="organism name" value="mouse"/>
</dbReference>
<dbReference type="PRO" id="PR:Q3UHZ5"/>
<dbReference type="Proteomes" id="UP000000589">
    <property type="component" value="Chromosome 6"/>
</dbReference>
<dbReference type="RNAct" id="Q3UHZ5">
    <property type="molecule type" value="protein"/>
</dbReference>
<dbReference type="Bgee" id="ENSMUSG00000029683">
    <property type="expression patterns" value="Expressed in interventricular septum and 70 other cell types or tissues"/>
</dbReference>
<dbReference type="GO" id="GO:0005884">
    <property type="term" value="C:actin filament"/>
    <property type="evidence" value="ECO:0000250"/>
    <property type="project" value="UniProtKB"/>
</dbReference>
<dbReference type="GO" id="GO:0031430">
    <property type="term" value="C:M band"/>
    <property type="evidence" value="ECO:0007669"/>
    <property type="project" value="UniProtKB-SubCell"/>
</dbReference>
<dbReference type="GO" id="GO:0030017">
    <property type="term" value="C:sarcomere"/>
    <property type="evidence" value="ECO:0000250"/>
    <property type="project" value="UniProtKB"/>
</dbReference>
<dbReference type="GO" id="GO:0003779">
    <property type="term" value="F:actin binding"/>
    <property type="evidence" value="ECO:0000250"/>
    <property type="project" value="UniProtKB"/>
</dbReference>
<dbReference type="GO" id="GO:0003785">
    <property type="term" value="F:actin monomer binding"/>
    <property type="evidence" value="ECO:0007669"/>
    <property type="project" value="Ensembl"/>
</dbReference>
<dbReference type="GO" id="GO:0005523">
    <property type="term" value="F:tropomyosin binding"/>
    <property type="evidence" value="ECO:0007669"/>
    <property type="project" value="Ensembl"/>
</dbReference>
<dbReference type="GO" id="GO:0030041">
    <property type="term" value="P:actin filament polymerization"/>
    <property type="evidence" value="ECO:0000315"/>
    <property type="project" value="UniProtKB"/>
</dbReference>
<dbReference type="GO" id="GO:0045010">
    <property type="term" value="P:actin nucleation"/>
    <property type="evidence" value="ECO:0000250"/>
    <property type="project" value="UniProtKB"/>
</dbReference>
<dbReference type="GO" id="GO:0051694">
    <property type="term" value="P:pointed-end actin filament capping"/>
    <property type="evidence" value="ECO:0007669"/>
    <property type="project" value="InterPro"/>
</dbReference>
<dbReference type="GO" id="GO:0030838">
    <property type="term" value="P:positive regulation of actin filament polymerization"/>
    <property type="evidence" value="ECO:0000250"/>
    <property type="project" value="UniProtKB"/>
</dbReference>
<dbReference type="GO" id="GO:0045214">
    <property type="term" value="P:sarcomere organization"/>
    <property type="evidence" value="ECO:0000315"/>
    <property type="project" value="UniProtKB"/>
</dbReference>
<dbReference type="FunFam" id="3.80.10.10:FF:000132">
    <property type="entry name" value="Leiomodin 2"/>
    <property type="match status" value="1"/>
</dbReference>
<dbReference type="Gene3D" id="3.80.10.10">
    <property type="entry name" value="Ribonuclease Inhibitor"/>
    <property type="match status" value="1"/>
</dbReference>
<dbReference type="InterPro" id="IPR032675">
    <property type="entry name" value="LRR_dom_sf"/>
</dbReference>
<dbReference type="InterPro" id="IPR004934">
    <property type="entry name" value="TMOD"/>
</dbReference>
<dbReference type="PANTHER" id="PTHR10901:SF12">
    <property type="entry name" value="LEIOMODIN-2"/>
    <property type="match status" value="1"/>
</dbReference>
<dbReference type="PANTHER" id="PTHR10901">
    <property type="entry name" value="TROPOMODULIN"/>
    <property type="match status" value="1"/>
</dbReference>
<dbReference type="Pfam" id="PF03250">
    <property type="entry name" value="Tropomodulin"/>
    <property type="match status" value="1"/>
</dbReference>
<dbReference type="SUPFAM" id="SSF52047">
    <property type="entry name" value="RNI-like"/>
    <property type="match status" value="1"/>
</dbReference>
<evidence type="ECO:0000250" key="1">
    <source>
        <dbReference type="UniProtKB" id="A1A5Q0"/>
    </source>
</evidence>
<evidence type="ECO:0000250" key="2">
    <source>
        <dbReference type="UniProtKB" id="Q6P5Q4"/>
    </source>
</evidence>
<evidence type="ECO:0000255" key="3"/>
<evidence type="ECO:0000256" key="4">
    <source>
        <dbReference type="SAM" id="MobiDB-lite"/>
    </source>
</evidence>
<evidence type="ECO:0000269" key="5">
    <source>
    </source>
</evidence>
<evidence type="ECO:0000269" key="6">
    <source>
    </source>
</evidence>
<evidence type="ECO:0000269" key="7">
    <source>
    </source>
</evidence>
<evidence type="ECO:0000269" key="8">
    <source>
    </source>
</evidence>
<evidence type="ECO:0000305" key="9"/>
<evidence type="ECO:0007744" key="10">
    <source>
    </source>
</evidence>
<proteinExistence type="evidence at protein level"/>
<name>LMOD2_MOUSE</name>